<reference key="1">
    <citation type="journal article" date="2005" name="Science">
        <title>The transcriptional landscape of the mammalian genome.</title>
        <authorList>
            <person name="Carninci P."/>
            <person name="Kasukawa T."/>
            <person name="Katayama S."/>
            <person name="Gough J."/>
            <person name="Frith M.C."/>
            <person name="Maeda N."/>
            <person name="Oyama R."/>
            <person name="Ravasi T."/>
            <person name="Lenhard B."/>
            <person name="Wells C."/>
            <person name="Kodzius R."/>
            <person name="Shimokawa K."/>
            <person name="Bajic V.B."/>
            <person name="Brenner S.E."/>
            <person name="Batalov S."/>
            <person name="Forrest A.R."/>
            <person name="Zavolan M."/>
            <person name="Davis M.J."/>
            <person name="Wilming L.G."/>
            <person name="Aidinis V."/>
            <person name="Allen J.E."/>
            <person name="Ambesi-Impiombato A."/>
            <person name="Apweiler R."/>
            <person name="Aturaliya R.N."/>
            <person name="Bailey T.L."/>
            <person name="Bansal M."/>
            <person name="Baxter L."/>
            <person name="Beisel K.W."/>
            <person name="Bersano T."/>
            <person name="Bono H."/>
            <person name="Chalk A.M."/>
            <person name="Chiu K.P."/>
            <person name="Choudhary V."/>
            <person name="Christoffels A."/>
            <person name="Clutterbuck D.R."/>
            <person name="Crowe M.L."/>
            <person name="Dalla E."/>
            <person name="Dalrymple B.P."/>
            <person name="de Bono B."/>
            <person name="Della Gatta G."/>
            <person name="di Bernardo D."/>
            <person name="Down T."/>
            <person name="Engstrom P."/>
            <person name="Fagiolini M."/>
            <person name="Faulkner G."/>
            <person name="Fletcher C.F."/>
            <person name="Fukushima T."/>
            <person name="Furuno M."/>
            <person name="Futaki S."/>
            <person name="Gariboldi M."/>
            <person name="Georgii-Hemming P."/>
            <person name="Gingeras T.R."/>
            <person name="Gojobori T."/>
            <person name="Green R.E."/>
            <person name="Gustincich S."/>
            <person name="Harbers M."/>
            <person name="Hayashi Y."/>
            <person name="Hensch T.K."/>
            <person name="Hirokawa N."/>
            <person name="Hill D."/>
            <person name="Huminiecki L."/>
            <person name="Iacono M."/>
            <person name="Ikeo K."/>
            <person name="Iwama A."/>
            <person name="Ishikawa T."/>
            <person name="Jakt M."/>
            <person name="Kanapin A."/>
            <person name="Katoh M."/>
            <person name="Kawasawa Y."/>
            <person name="Kelso J."/>
            <person name="Kitamura H."/>
            <person name="Kitano H."/>
            <person name="Kollias G."/>
            <person name="Krishnan S.P."/>
            <person name="Kruger A."/>
            <person name="Kummerfeld S.K."/>
            <person name="Kurochkin I.V."/>
            <person name="Lareau L.F."/>
            <person name="Lazarevic D."/>
            <person name="Lipovich L."/>
            <person name="Liu J."/>
            <person name="Liuni S."/>
            <person name="McWilliam S."/>
            <person name="Madan Babu M."/>
            <person name="Madera M."/>
            <person name="Marchionni L."/>
            <person name="Matsuda H."/>
            <person name="Matsuzawa S."/>
            <person name="Miki H."/>
            <person name="Mignone F."/>
            <person name="Miyake S."/>
            <person name="Morris K."/>
            <person name="Mottagui-Tabar S."/>
            <person name="Mulder N."/>
            <person name="Nakano N."/>
            <person name="Nakauchi H."/>
            <person name="Ng P."/>
            <person name="Nilsson R."/>
            <person name="Nishiguchi S."/>
            <person name="Nishikawa S."/>
            <person name="Nori F."/>
            <person name="Ohara O."/>
            <person name="Okazaki Y."/>
            <person name="Orlando V."/>
            <person name="Pang K.C."/>
            <person name="Pavan W.J."/>
            <person name="Pavesi G."/>
            <person name="Pesole G."/>
            <person name="Petrovsky N."/>
            <person name="Piazza S."/>
            <person name="Reed J."/>
            <person name="Reid J.F."/>
            <person name="Ring B.Z."/>
            <person name="Ringwald M."/>
            <person name="Rost B."/>
            <person name="Ruan Y."/>
            <person name="Salzberg S.L."/>
            <person name="Sandelin A."/>
            <person name="Schneider C."/>
            <person name="Schoenbach C."/>
            <person name="Sekiguchi K."/>
            <person name="Semple C.A."/>
            <person name="Seno S."/>
            <person name="Sessa L."/>
            <person name="Sheng Y."/>
            <person name="Shibata Y."/>
            <person name="Shimada H."/>
            <person name="Shimada K."/>
            <person name="Silva D."/>
            <person name="Sinclair B."/>
            <person name="Sperling S."/>
            <person name="Stupka E."/>
            <person name="Sugiura K."/>
            <person name="Sultana R."/>
            <person name="Takenaka Y."/>
            <person name="Taki K."/>
            <person name="Tammoja K."/>
            <person name="Tan S.L."/>
            <person name="Tang S."/>
            <person name="Taylor M.S."/>
            <person name="Tegner J."/>
            <person name="Teichmann S.A."/>
            <person name="Ueda H.R."/>
            <person name="van Nimwegen E."/>
            <person name="Verardo R."/>
            <person name="Wei C.L."/>
            <person name="Yagi K."/>
            <person name="Yamanishi H."/>
            <person name="Zabarovsky E."/>
            <person name="Zhu S."/>
            <person name="Zimmer A."/>
            <person name="Hide W."/>
            <person name="Bult C."/>
            <person name="Grimmond S.M."/>
            <person name="Teasdale R.D."/>
            <person name="Liu E.T."/>
            <person name="Brusic V."/>
            <person name="Quackenbush J."/>
            <person name="Wahlestedt C."/>
            <person name="Mattick J.S."/>
            <person name="Hume D.A."/>
            <person name="Kai C."/>
            <person name="Sasaki D."/>
            <person name="Tomaru Y."/>
            <person name="Fukuda S."/>
            <person name="Kanamori-Katayama M."/>
            <person name="Suzuki M."/>
            <person name="Aoki J."/>
            <person name="Arakawa T."/>
            <person name="Iida J."/>
            <person name="Imamura K."/>
            <person name="Itoh M."/>
            <person name="Kato T."/>
            <person name="Kawaji H."/>
            <person name="Kawagashira N."/>
            <person name="Kawashima T."/>
            <person name="Kojima M."/>
            <person name="Kondo S."/>
            <person name="Konno H."/>
            <person name="Nakano K."/>
            <person name="Ninomiya N."/>
            <person name="Nishio T."/>
            <person name="Okada M."/>
            <person name="Plessy C."/>
            <person name="Shibata K."/>
            <person name="Shiraki T."/>
            <person name="Suzuki S."/>
            <person name="Tagami M."/>
            <person name="Waki K."/>
            <person name="Watahiki A."/>
            <person name="Okamura-Oho Y."/>
            <person name="Suzuki H."/>
            <person name="Kawai J."/>
            <person name="Hayashizaki Y."/>
        </authorList>
    </citation>
    <scope>NUCLEOTIDE SEQUENCE [LARGE SCALE MRNA] (ISOFORMS 1; 2 AND 3)</scope>
    <source>
        <strain>C57BL/6J</strain>
        <tissue>Bone marrow</tissue>
        <tissue>Embryo</tissue>
        <tissue>Head</tissue>
    </source>
</reference>
<reference key="2">
    <citation type="journal article" date="2004" name="Genome Res.">
        <title>The status, quality, and expansion of the NIH full-length cDNA project: the Mammalian Gene Collection (MGC).</title>
        <authorList>
            <consortium name="The MGC Project Team"/>
        </authorList>
    </citation>
    <scope>NUCLEOTIDE SEQUENCE [LARGE SCALE MRNA] (ISOFORM 3)</scope>
    <source>
        <strain>Czech II</strain>
        <tissue>Mammary tumor</tissue>
    </source>
</reference>
<name>CH033_MOUSE</name>
<protein>
    <recommendedName>
        <fullName>UPF0488 protein C8orf33 homolog</fullName>
    </recommendedName>
</protein>
<accession>Q3U6N9</accession>
<accession>Q3URI5</accession>
<accession>Q9D0Z5</accession>
<evidence type="ECO:0000250" key="1">
    <source>
        <dbReference type="UniProtKB" id="Q9H7E9"/>
    </source>
</evidence>
<evidence type="ECO:0000256" key="2">
    <source>
        <dbReference type="SAM" id="MobiDB-lite"/>
    </source>
</evidence>
<evidence type="ECO:0000303" key="3">
    <source>
    </source>
</evidence>
<evidence type="ECO:0000303" key="4">
    <source>
    </source>
</evidence>
<evidence type="ECO:0000305" key="5"/>
<feature type="initiator methionine" description="Removed" evidence="1">
    <location>
        <position position="1"/>
    </location>
</feature>
<feature type="chain" id="PRO_0000304983" description="UPF0488 protein C8orf33 homolog">
    <location>
        <begin position="2"/>
        <end position="222"/>
    </location>
</feature>
<feature type="region of interest" description="Disordered" evidence="2">
    <location>
        <begin position="1"/>
        <end position="103"/>
    </location>
</feature>
<feature type="region of interest" description="Disordered" evidence="2">
    <location>
        <begin position="119"/>
        <end position="146"/>
    </location>
</feature>
<feature type="region of interest" description="Disordered" evidence="2">
    <location>
        <begin position="186"/>
        <end position="210"/>
    </location>
</feature>
<feature type="compositionally biased region" description="Low complexity" evidence="2">
    <location>
        <begin position="1"/>
        <end position="16"/>
    </location>
</feature>
<feature type="compositionally biased region" description="Basic residues" evidence="2">
    <location>
        <begin position="17"/>
        <end position="28"/>
    </location>
</feature>
<feature type="compositionally biased region" description="Low complexity" evidence="2">
    <location>
        <begin position="29"/>
        <end position="39"/>
    </location>
</feature>
<feature type="compositionally biased region" description="Low complexity" evidence="2">
    <location>
        <begin position="93"/>
        <end position="103"/>
    </location>
</feature>
<feature type="modified residue" description="N-acetylalanine" evidence="1">
    <location>
        <position position="2"/>
    </location>
</feature>
<feature type="modified residue" description="Omega-N-methylarginine" evidence="1">
    <location>
        <position position="27"/>
    </location>
</feature>
<feature type="modified residue" description="Phosphoserine" evidence="1">
    <location>
        <position position="75"/>
    </location>
</feature>
<feature type="splice variant" id="VSP_028170" description="In isoform 2 and isoform 3." evidence="3 4">
    <location>
        <begin position="1"/>
        <end position="62"/>
    </location>
</feature>
<feature type="splice variant" id="VSP_028171" description="In isoform 2." evidence="4">
    <location>
        <position position="129"/>
    </location>
</feature>
<sequence>MAEPGRPAREAPAASSRKTHRAPRRPRPSRSASGASEPPLRSSVQPACDSAAGTHPVGNTVAMKQKKKKTPNRVSGTNGSEKPSEKPAPDEAPPSAEAQAEQLARELAWCVEQLELGLKTQRPTPKQKEQAVGAIRTLRSEKTPLPRKRQLMRSLFGDYRAQMDAEWREALRALKAATHSAQVQLVSEATRKKSGRVCRPRPAERAKTTPDLTSEEFRFNFF</sequence>
<proteinExistence type="evidence at transcript level"/>
<organism>
    <name type="scientific">Mus musculus</name>
    <name type="common">Mouse</name>
    <dbReference type="NCBI Taxonomy" id="10090"/>
    <lineage>
        <taxon>Eukaryota</taxon>
        <taxon>Metazoa</taxon>
        <taxon>Chordata</taxon>
        <taxon>Craniata</taxon>
        <taxon>Vertebrata</taxon>
        <taxon>Euteleostomi</taxon>
        <taxon>Mammalia</taxon>
        <taxon>Eutheria</taxon>
        <taxon>Euarchontoglires</taxon>
        <taxon>Glires</taxon>
        <taxon>Rodentia</taxon>
        <taxon>Myomorpha</taxon>
        <taxon>Muroidea</taxon>
        <taxon>Muridae</taxon>
        <taxon>Murinae</taxon>
        <taxon>Mus</taxon>
        <taxon>Mus</taxon>
    </lineage>
</organism>
<keyword id="KW-0007">Acetylation</keyword>
<keyword id="KW-0025">Alternative splicing</keyword>
<keyword id="KW-0488">Methylation</keyword>
<keyword id="KW-0597">Phosphoprotein</keyword>
<keyword id="KW-1185">Reference proteome</keyword>
<comment type="alternative products">
    <event type="alternative splicing"/>
    <isoform>
        <id>Q3U6N9-1</id>
        <name>1</name>
        <sequence type="displayed"/>
    </isoform>
    <isoform>
        <id>Q3U6N9-2</id>
        <name>2</name>
        <sequence type="described" ref="VSP_028170 VSP_028171"/>
    </isoform>
    <isoform>
        <id>Q3U6N9-3</id>
        <name>3</name>
        <sequence type="described" ref="VSP_028170"/>
    </isoform>
</comment>
<comment type="similarity">
    <text evidence="5">Belongs to the UPF0488 family.</text>
</comment>
<dbReference type="EMBL" id="AK004154">
    <property type="protein sequence ID" value="BAB23195.1"/>
    <property type="molecule type" value="mRNA"/>
</dbReference>
<dbReference type="EMBL" id="AK141496">
    <property type="protein sequence ID" value="BAE24703.1"/>
    <property type="molecule type" value="mRNA"/>
</dbReference>
<dbReference type="EMBL" id="AK153059">
    <property type="protein sequence ID" value="BAE31685.1"/>
    <property type="molecule type" value="mRNA"/>
</dbReference>
<dbReference type="EMBL" id="AK160695">
    <property type="protein sequence ID" value="BAE35959.1"/>
    <property type="molecule type" value="mRNA"/>
</dbReference>
<dbReference type="EMBL" id="BC038324">
    <property type="protein sequence ID" value="AAH38324.1"/>
    <property type="molecule type" value="mRNA"/>
</dbReference>
<dbReference type="EMBL" id="BC091734">
    <property type="protein sequence ID" value="AAH91734.1"/>
    <property type="molecule type" value="mRNA"/>
</dbReference>
<dbReference type="CCDS" id="CCDS84175.1">
    <molecule id="Q3U6N9-1"/>
</dbReference>
<dbReference type="CCDS" id="CCDS88794.1">
    <molecule id="Q3U6N9-3"/>
</dbReference>
<dbReference type="RefSeq" id="NP_001334469.1">
    <molecule id="Q3U6N9-1"/>
    <property type="nucleotide sequence ID" value="NM_001347540.1"/>
</dbReference>
<dbReference type="RefSeq" id="NP_473440.1">
    <molecule id="Q3U6N9-3"/>
    <property type="nucleotide sequence ID" value="NM_054099.3"/>
</dbReference>
<dbReference type="SMR" id="Q3U6N9"/>
<dbReference type="FunCoup" id="Q3U6N9">
    <property type="interactions" value="70"/>
</dbReference>
<dbReference type="STRING" id="10090.ENSMUSP00000071698"/>
<dbReference type="iPTMnet" id="Q3U6N9"/>
<dbReference type="PhosphoSitePlus" id="Q3U6N9"/>
<dbReference type="PaxDb" id="10090-ENSMUSP00000071698"/>
<dbReference type="PeptideAtlas" id="Q3U6N9"/>
<dbReference type="Pumba" id="Q3U6N9"/>
<dbReference type="Antibodypedia" id="28690">
    <property type="antibodies" value="81 antibodies from 12 providers"/>
</dbReference>
<dbReference type="DNASU" id="117171"/>
<dbReference type="Ensembl" id="ENSMUST00000071792.7">
    <molecule id="Q3U6N9-1"/>
    <property type="protein sequence ID" value="ENSMUSP00000071698.6"/>
    <property type="gene ID" value="ENSMUSG00000063236.7"/>
</dbReference>
<dbReference type="Ensembl" id="ENSMUST00000229229.2">
    <molecule id="Q3U6N9-2"/>
    <property type="protein sequence ID" value="ENSMUSP00000155387.2"/>
    <property type="gene ID" value="ENSMUSG00000063236.7"/>
</dbReference>
<dbReference type="Ensembl" id="ENSMUST00000230274.2">
    <molecule id="Q3U6N9-3"/>
    <property type="protein sequence ID" value="ENSMUSP00000154907.2"/>
    <property type="gene ID" value="ENSMUSG00000063236.7"/>
</dbReference>
<dbReference type="GeneID" id="117171"/>
<dbReference type="KEGG" id="mmu:117171"/>
<dbReference type="UCSC" id="uc007wmv.1">
    <molecule id="Q3U6N9-1"/>
    <property type="organism name" value="mouse"/>
</dbReference>
<dbReference type="UCSC" id="uc011zvd.1">
    <molecule id="Q3U6N9-2"/>
    <property type="organism name" value="mouse"/>
</dbReference>
<dbReference type="AGR" id="MGI:2152337"/>
<dbReference type="MGI" id="MGI:2152337">
    <property type="gene designation" value="1110038F14Rik"/>
</dbReference>
<dbReference type="VEuPathDB" id="HostDB:ENSMUSG00000063236"/>
<dbReference type="eggNOG" id="ENOG502S1RU">
    <property type="taxonomic scope" value="Eukaryota"/>
</dbReference>
<dbReference type="GeneTree" id="ENSGT00390000000306"/>
<dbReference type="HOGENOM" id="CLU_082144_1_1_1"/>
<dbReference type="InParanoid" id="Q3U6N9"/>
<dbReference type="OMA" id="PTCNDEG"/>
<dbReference type="OrthoDB" id="20277at2759"/>
<dbReference type="PhylomeDB" id="Q3U6N9"/>
<dbReference type="TreeFam" id="TF326272"/>
<dbReference type="BioGRID-ORCS" id="117171">
    <property type="hits" value="3 hits in 70 CRISPR screens"/>
</dbReference>
<dbReference type="PRO" id="PR:Q3U6N9"/>
<dbReference type="Proteomes" id="UP000000589">
    <property type="component" value="Chromosome 15"/>
</dbReference>
<dbReference type="RNAct" id="Q3U6N9">
    <property type="molecule type" value="protein"/>
</dbReference>
<dbReference type="Bgee" id="ENSMUSG00000063236">
    <property type="expression patterns" value="Expressed in cleaving embryo and 265 other cell types or tissues"/>
</dbReference>
<dbReference type="InterPro" id="IPR029274">
    <property type="entry name" value="DUF4615"/>
</dbReference>
<dbReference type="PANTHER" id="PTHR13602">
    <property type="entry name" value="UPF0488 PROTEIN C8ORF33"/>
    <property type="match status" value="1"/>
</dbReference>
<dbReference type="PANTHER" id="PTHR13602:SF2">
    <property type="entry name" value="UPF0488 PROTEIN C8ORF33"/>
    <property type="match status" value="1"/>
</dbReference>
<dbReference type="Pfam" id="PF15393">
    <property type="entry name" value="DUF4615"/>
    <property type="match status" value="1"/>
</dbReference>